<sequence length="176" mass="19822">MTEAHNACCHPSGTAAGHHGAGKASTDMMDAVDRRLLDIIQTGFPIEPRPYAVLGETLGITECEALARVRALRERKVIRRLGANFDSWKLGFRSTLCAAKVPEDRIDAFVAEVNRHVNVTHNYLRNHEYNIWFTCICPSWEQVCSLLDGITERTGIPILNLPATKLYKIRVDFRMD</sequence>
<keyword id="KW-0350">Heme biosynthesis</keyword>
<keyword id="KW-0456">Lyase</keyword>
<keyword id="KW-1185">Reference proteome</keyword>
<gene>
    <name evidence="4" type="primary">ahbA</name>
    <name evidence="6" type="ordered locus">DVU_0854</name>
</gene>
<accession>Q72DS5</accession>
<dbReference type="EC" id="4.1.1.111" evidence="2 3"/>
<dbReference type="EMBL" id="AE017285">
    <property type="protein sequence ID" value="AAS95334.1"/>
    <property type="molecule type" value="Genomic_DNA"/>
</dbReference>
<dbReference type="RefSeq" id="WP_010938154.1">
    <property type="nucleotide sequence ID" value="NC_002937.3"/>
</dbReference>
<dbReference type="RefSeq" id="YP_010075.1">
    <property type="nucleotide sequence ID" value="NC_002937.3"/>
</dbReference>
<dbReference type="SMR" id="Q72DS5"/>
<dbReference type="IntAct" id="Q72DS5">
    <property type="interactions" value="3"/>
</dbReference>
<dbReference type="STRING" id="882.DVU_0854"/>
<dbReference type="PaxDb" id="882-DVU_0854"/>
<dbReference type="DNASU" id="2794183"/>
<dbReference type="EnsemblBacteria" id="AAS95334">
    <property type="protein sequence ID" value="AAS95334"/>
    <property type="gene ID" value="DVU_0854"/>
</dbReference>
<dbReference type="KEGG" id="dvu:DVU_0854"/>
<dbReference type="PATRIC" id="fig|882.5.peg.798"/>
<dbReference type="eggNOG" id="COG1522">
    <property type="taxonomic scope" value="Bacteria"/>
</dbReference>
<dbReference type="HOGENOM" id="CLU_112007_1_0_7"/>
<dbReference type="OrthoDB" id="9806536at2"/>
<dbReference type="PhylomeDB" id="Q72DS5"/>
<dbReference type="UniPathway" id="UPA00252"/>
<dbReference type="Proteomes" id="UP000002194">
    <property type="component" value="Chromosome"/>
</dbReference>
<dbReference type="GO" id="GO:0016829">
    <property type="term" value="F:lyase activity"/>
    <property type="evidence" value="ECO:0007669"/>
    <property type="project" value="UniProtKB-KW"/>
</dbReference>
<dbReference type="GO" id="GO:0006783">
    <property type="term" value="P:heme biosynthetic process"/>
    <property type="evidence" value="ECO:0007669"/>
    <property type="project" value="UniProtKB-KW"/>
</dbReference>
<dbReference type="Gene3D" id="3.30.70.3460">
    <property type="match status" value="1"/>
</dbReference>
<dbReference type="Gene3D" id="1.10.10.10">
    <property type="entry name" value="Winged helix-like DNA-binding domain superfamily/Winged helix DNA-binding domain"/>
    <property type="match status" value="1"/>
</dbReference>
<dbReference type="InterPro" id="IPR040523">
    <property type="entry name" value="AsnC_trans_reg2"/>
</dbReference>
<dbReference type="InterPro" id="IPR050684">
    <property type="entry name" value="HTH-Siroheme_Decarb"/>
</dbReference>
<dbReference type="InterPro" id="IPR053953">
    <property type="entry name" value="NirdL-like_HTH"/>
</dbReference>
<dbReference type="InterPro" id="IPR053429">
    <property type="entry name" value="Siroheme_Decarboxylase"/>
</dbReference>
<dbReference type="InterPro" id="IPR036388">
    <property type="entry name" value="WH-like_DNA-bd_sf"/>
</dbReference>
<dbReference type="InterPro" id="IPR036390">
    <property type="entry name" value="WH_DNA-bd_sf"/>
</dbReference>
<dbReference type="NCBIfam" id="NF040708">
    <property type="entry name" value="Siroheme_Dcarb_AhbA"/>
    <property type="match status" value="1"/>
</dbReference>
<dbReference type="PANTHER" id="PTHR43413:SF1">
    <property type="entry name" value="SIROHEME DECARBOXYLASE NIRL SUBUNIT"/>
    <property type="match status" value="1"/>
</dbReference>
<dbReference type="PANTHER" id="PTHR43413">
    <property type="entry name" value="TRANSCRIPTIONAL REGULATOR, ASNC FAMILY"/>
    <property type="match status" value="1"/>
</dbReference>
<dbReference type="Pfam" id="PF17805">
    <property type="entry name" value="AsnC_trans_reg2"/>
    <property type="match status" value="1"/>
</dbReference>
<dbReference type="Pfam" id="PF22451">
    <property type="entry name" value="NirdL-like_HTH"/>
    <property type="match status" value="1"/>
</dbReference>
<dbReference type="SUPFAM" id="SSF46785">
    <property type="entry name" value="Winged helix' DNA-binding domain"/>
    <property type="match status" value="1"/>
</dbReference>
<protein>
    <recommendedName>
        <fullName evidence="5">Siroheme decarboxylase alpha subunit</fullName>
        <ecNumber evidence="2 3">4.1.1.111</ecNumber>
    </recommendedName>
</protein>
<name>AHBA_NITV2</name>
<proteinExistence type="evidence at protein level"/>
<evidence type="ECO:0000256" key="1">
    <source>
        <dbReference type="SAM" id="MobiDB-lite"/>
    </source>
</evidence>
<evidence type="ECO:0000269" key="2">
    <source>
    </source>
</evidence>
<evidence type="ECO:0000269" key="3">
    <source>
    </source>
</evidence>
<evidence type="ECO:0000303" key="4">
    <source>
    </source>
</evidence>
<evidence type="ECO:0000305" key="5"/>
<evidence type="ECO:0000312" key="6">
    <source>
        <dbReference type="EMBL" id="AAS95334.1"/>
    </source>
</evidence>
<organism>
    <name type="scientific">Nitratidesulfovibrio vulgaris (strain ATCC 29579 / DSM 644 / CCUG 34227 / NCIMB 8303 / VKM B-1760 / Hildenborough)</name>
    <name type="common">Desulfovibrio vulgaris</name>
    <dbReference type="NCBI Taxonomy" id="882"/>
    <lineage>
        <taxon>Bacteria</taxon>
        <taxon>Pseudomonadati</taxon>
        <taxon>Thermodesulfobacteriota</taxon>
        <taxon>Desulfovibrionia</taxon>
        <taxon>Desulfovibrionales</taxon>
        <taxon>Desulfovibrionaceae</taxon>
        <taxon>Nitratidesulfovibrio</taxon>
    </lineage>
</organism>
<reference key="1">
    <citation type="journal article" date="2004" name="Nat. Biotechnol.">
        <title>The genome sequence of the anaerobic, sulfate-reducing bacterium Desulfovibrio vulgaris Hildenborough.</title>
        <authorList>
            <person name="Heidelberg J.F."/>
            <person name="Seshadri R."/>
            <person name="Haveman S.A."/>
            <person name="Hemme C.L."/>
            <person name="Paulsen I.T."/>
            <person name="Kolonay J.F."/>
            <person name="Eisen J.A."/>
            <person name="Ward N.L."/>
            <person name="Methe B.A."/>
            <person name="Brinkac L.M."/>
            <person name="Daugherty S.C."/>
            <person name="DeBoy R.T."/>
            <person name="Dodson R.J."/>
            <person name="Durkin A.S."/>
            <person name="Madupu R."/>
            <person name="Nelson W.C."/>
            <person name="Sullivan S.A."/>
            <person name="Fouts D.E."/>
            <person name="Haft D.H."/>
            <person name="Selengut J."/>
            <person name="Peterson J.D."/>
            <person name="Davidsen T.M."/>
            <person name="Zafar N."/>
            <person name="Zhou L."/>
            <person name="Radune D."/>
            <person name="Dimitrov G."/>
            <person name="Hance M."/>
            <person name="Tran K."/>
            <person name="Khouri H.M."/>
            <person name="Gill J."/>
            <person name="Utterback T.R."/>
            <person name="Feldblyum T.V."/>
            <person name="Wall J.D."/>
            <person name="Voordouw G."/>
            <person name="Fraser C.M."/>
        </authorList>
    </citation>
    <scope>NUCLEOTIDE SEQUENCE [LARGE SCALE GENOMIC DNA]</scope>
    <source>
        <strain>ATCC 29579 / DSM 644 / CCUG 34227 / NCIMB 8303 / VKM B-1760 / Hildenborough</strain>
    </source>
</reference>
<reference key="2">
    <citation type="journal article" date="2011" name="Proc. Natl. Acad. Sci. U.S.A.">
        <title>Molecular hijacking of siroheme for the synthesis of heme and d1 heme.</title>
        <authorList>
            <person name="Bali S."/>
            <person name="Lawrence A.D."/>
            <person name="Lobo S.A."/>
            <person name="Saraiva L.M."/>
            <person name="Golding B.T."/>
            <person name="Palmer D.J."/>
            <person name="Howard M.J."/>
            <person name="Ferguson S.J."/>
            <person name="Warren M.J."/>
        </authorList>
    </citation>
    <scope>FUNCTION</scope>
    <scope>CATALYTIC ACTIVITY</scope>
    <scope>PATHWAY</scope>
    <scope>SUBUNIT</scope>
    <source>
        <strain>ATCC 29579 / DSM 644 / CCUG 34227 / NCIMB 8303 / VKM B-1760 / Hildenborough</strain>
    </source>
</reference>
<reference key="3">
    <citation type="journal article" date="2014" name="Mol. Microbiol.">
        <title>The structure, function and properties of sirohaem decarboxylase--an enzyme with structural homology to a transcription factor family that is part of the alternative haem biosynthesis pathway.</title>
        <authorList>
            <person name="Palmer D.J."/>
            <person name="Schroeder S."/>
            <person name="Lawrence A.D."/>
            <person name="Deery E."/>
            <person name="Lobo S.A."/>
            <person name="Saraiva L.M."/>
            <person name="McLean K.J."/>
            <person name="Munro A.W."/>
            <person name="Ferguson S.J."/>
            <person name="Pickersgill R.W."/>
            <person name="Brown D.G."/>
            <person name="Warren M.J."/>
        </authorList>
    </citation>
    <scope>FUNCTION</scope>
    <scope>CATALYTIC ACTIVITY</scope>
    <scope>PATHWAY</scope>
    <scope>SUBUNIT</scope>
    <scope>HEME-BINDING</scope>
</reference>
<feature type="chain" id="PRO_0000450504" description="Siroheme decarboxylase alpha subunit">
    <location>
        <begin position="1"/>
        <end position="176"/>
    </location>
</feature>
<feature type="region of interest" description="Disordered" evidence="1">
    <location>
        <begin position="1"/>
        <end position="24"/>
    </location>
</feature>
<feature type="compositionally biased region" description="Low complexity" evidence="1">
    <location>
        <begin position="12"/>
        <end position="24"/>
    </location>
</feature>
<comment type="function">
    <text evidence="2 3">Involved in siroheme-dependent heme b biosynthesis. Catalyzes the decarboxylation of siroheme into didecarboxysiroheme.</text>
</comment>
<comment type="catalytic activity">
    <reaction evidence="2 3">
        <text>siroheme + 2 H(+) = 12,18-didecarboxysiroheme + 2 CO2</text>
        <dbReference type="Rhea" id="RHEA:19093"/>
        <dbReference type="ChEBI" id="CHEBI:15378"/>
        <dbReference type="ChEBI" id="CHEBI:16526"/>
        <dbReference type="ChEBI" id="CHEBI:60052"/>
        <dbReference type="ChEBI" id="CHEBI:140497"/>
        <dbReference type="EC" id="4.1.1.111"/>
    </reaction>
</comment>
<comment type="pathway">
    <text evidence="2 3">Porphyrin-containing compound metabolism; protoheme biosynthesis.</text>
</comment>
<comment type="subunit">
    <text evidence="2 3">Forms a heterodimer composed of AhbA and AhbB (PubMed:21969545, PubMed:24865947). Also forms heterotetramers (PubMed:24865947).</text>
</comment>
<comment type="miscellaneous">
    <text evidence="3">Binds heme b, but reducing agents do not affect the activity of the enzyme.</text>
</comment>
<comment type="similarity">
    <text evidence="5">Belongs to the Ahb/Nir family.</text>
</comment>